<name>RL23_BUCAI</name>
<reference key="1">
    <citation type="journal article" date="2000" name="Nature">
        <title>Genome sequence of the endocellular bacterial symbiont of aphids Buchnera sp. APS.</title>
        <authorList>
            <person name="Shigenobu S."/>
            <person name="Watanabe H."/>
            <person name="Hattori M."/>
            <person name="Sakaki Y."/>
            <person name="Ishikawa H."/>
        </authorList>
    </citation>
    <scope>NUCLEOTIDE SEQUENCE [LARGE SCALE GENOMIC DNA]</scope>
    <source>
        <strain>APS</strain>
    </source>
</reference>
<comment type="function">
    <text evidence="1">One of the early assembly proteins it binds 23S rRNA. One of the proteins that surrounds the polypeptide exit tunnel on the outside of the ribosome. Forms the main docking site for trigger factor binding to the ribosome.</text>
</comment>
<comment type="subunit">
    <text evidence="1">Part of the 50S ribosomal subunit. Contacts protein L29, and trigger factor when it is bound to the ribosome.</text>
</comment>
<comment type="similarity">
    <text evidence="1">Belongs to the universal ribosomal protein uL23 family.</text>
</comment>
<keyword id="KW-1185">Reference proteome</keyword>
<keyword id="KW-0687">Ribonucleoprotein</keyword>
<keyword id="KW-0689">Ribosomal protein</keyword>
<keyword id="KW-0694">RNA-binding</keyword>
<keyword id="KW-0699">rRNA-binding</keyword>
<feature type="chain" id="PRO_0000129400" description="Large ribosomal subunit protein uL23">
    <location>
        <begin position="1"/>
        <end position="100"/>
    </location>
</feature>
<evidence type="ECO:0000255" key="1">
    <source>
        <dbReference type="HAMAP-Rule" id="MF_01369"/>
    </source>
</evidence>
<evidence type="ECO:0000305" key="2"/>
<proteinExistence type="inferred from homology"/>
<organism>
    <name type="scientific">Buchnera aphidicola subsp. Acyrthosiphon pisum (strain APS)</name>
    <name type="common">Acyrthosiphon pisum symbiotic bacterium</name>
    <dbReference type="NCBI Taxonomy" id="107806"/>
    <lineage>
        <taxon>Bacteria</taxon>
        <taxon>Pseudomonadati</taxon>
        <taxon>Pseudomonadota</taxon>
        <taxon>Gammaproteobacteria</taxon>
        <taxon>Enterobacterales</taxon>
        <taxon>Erwiniaceae</taxon>
        <taxon>Buchnera</taxon>
    </lineage>
</organism>
<accession>P57589</accession>
<sequence>MISEERLLKILLSPHVSEKTSISMEKFNTVVLKVLNNATKYEIKYAVKKIFDVDVDSIKTLKVKGKKKRQSNRIIQRSHWKKAYIKVKKGCNLDFIGNTE</sequence>
<dbReference type="EMBL" id="BA000003">
    <property type="protein sequence ID" value="BAB13215.1"/>
    <property type="molecule type" value="Genomic_DNA"/>
</dbReference>
<dbReference type="RefSeq" id="NP_240329.1">
    <property type="nucleotide sequence ID" value="NC_002528.1"/>
</dbReference>
<dbReference type="RefSeq" id="WP_009874473.1">
    <property type="nucleotide sequence ID" value="NZ_AP036055.1"/>
</dbReference>
<dbReference type="SMR" id="P57589"/>
<dbReference type="STRING" id="563178.BUAP5A_515"/>
<dbReference type="EnsemblBacteria" id="BAB13215">
    <property type="protein sequence ID" value="BAB13215"/>
    <property type="gene ID" value="BAB13215"/>
</dbReference>
<dbReference type="KEGG" id="buc:BU522"/>
<dbReference type="PATRIC" id="fig|107806.10.peg.527"/>
<dbReference type="eggNOG" id="COG0089">
    <property type="taxonomic scope" value="Bacteria"/>
</dbReference>
<dbReference type="HOGENOM" id="CLU_037562_3_1_6"/>
<dbReference type="Proteomes" id="UP000001806">
    <property type="component" value="Chromosome"/>
</dbReference>
<dbReference type="GO" id="GO:1990904">
    <property type="term" value="C:ribonucleoprotein complex"/>
    <property type="evidence" value="ECO:0007669"/>
    <property type="project" value="UniProtKB-KW"/>
</dbReference>
<dbReference type="GO" id="GO:0005840">
    <property type="term" value="C:ribosome"/>
    <property type="evidence" value="ECO:0007669"/>
    <property type="project" value="UniProtKB-KW"/>
</dbReference>
<dbReference type="GO" id="GO:0019843">
    <property type="term" value="F:rRNA binding"/>
    <property type="evidence" value="ECO:0007669"/>
    <property type="project" value="UniProtKB-UniRule"/>
</dbReference>
<dbReference type="GO" id="GO:0003735">
    <property type="term" value="F:structural constituent of ribosome"/>
    <property type="evidence" value="ECO:0007669"/>
    <property type="project" value="InterPro"/>
</dbReference>
<dbReference type="GO" id="GO:0006412">
    <property type="term" value="P:translation"/>
    <property type="evidence" value="ECO:0007669"/>
    <property type="project" value="UniProtKB-UniRule"/>
</dbReference>
<dbReference type="FunFam" id="3.30.70.330:FF:000001">
    <property type="entry name" value="50S ribosomal protein L23"/>
    <property type="match status" value="1"/>
</dbReference>
<dbReference type="Gene3D" id="3.30.70.330">
    <property type="match status" value="1"/>
</dbReference>
<dbReference type="HAMAP" id="MF_01369_B">
    <property type="entry name" value="Ribosomal_uL23_B"/>
    <property type="match status" value="1"/>
</dbReference>
<dbReference type="InterPro" id="IPR012677">
    <property type="entry name" value="Nucleotide-bd_a/b_plait_sf"/>
</dbReference>
<dbReference type="InterPro" id="IPR013025">
    <property type="entry name" value="Ribosomal_uL23-like"/>
</dbReference>
<dbReference type="InterPro" id="IPR012678">
    <property type="entry name" value="Ribosomal_uL23/eL15/eS24_sf"/>
</dbReference>
<dbReference type="NCBIfam" id="NF004358">
    <property type="entry name" value="PRK05738.1-1"/>
    <property type="match status" value="1"/>
</dbReference>
<dbReference type="NCBIfam" id="NF004359">
    <property type="entry name" value="PRK05738.1-3"/>
    <property type="match status" value="1"/>
</dbReference>
<dbReference type="NCBIfam" id="NF004363">
    <property type="entry name" value="PRK05738.2-4"/>
    <property type="match status" value="1"/>
</dbReference>
<dbReference type="PANTHER" id="PTHR11620">
    <property type="entry name" value="60S RIBOSOMAL PROTEIN L23A"/>
    <property type="match status" value="1"/>
</dbReference>
<dbReference type="Pfam" id="PF00276">
    <property type="entry name" value="Ribosomal_L23"/>
    <property type="match status" value="1"/>
</dbReference>
<dbReference type="SUPFAM" id="SSF54189">
    <property type="entry name" value="Ribosomal proteins S24e, L23 and L15e"/>
    <property type="match status" value="1"/>
</dbReference>
<protein>
    <recommendedName>
        <fullName evidence="1">Large ribosomal subunit protein uL23</fullName>
    </recommendedName>
    <alternativeName>
        <fullName evidence="2">50S ribosomal protein L23</fullName>
    </alternativeName>
</protein>
<gene>
    <name evidence="1" type="primary">rplW</name>
    <name type="ordered locus">BU522</name>
</gene>